<geneLocation type="chloroplast"/>
<keyword id="KW-0150">Chloroplast</keyword>
<keyword id="KW-0201">Cytochrome c-type biogenesis</keyword>
<keyword id="KW-0472">Membrane</keyword>
<keyword id="KW-0934">Plastid</keyword>
<keyword id="KW-0793">Thylakoid</keyword>
<keyword id="KW-0812">Transmembrane</keyword>
<keyword id="KW-1133">Transmembrane helix</keyword>
<feature type="chain" id="PRO_0000353795" description="Cytochrome c biogenesis protein CcsA">
    <location>
        <begin position="1"/>
        <end position="322"/>
    </location>
</feature>
<feature type="transmembrane region" description="Helical" evidence="1">
    <location>
        <begin position="19"/>
        <end position="39"/>
    </location>
</feature>
<feature type="transmembrane region" description="Helical" evidence="1">
    <location>
        <begin position="43"/>
        <end position="63"/>
    </location>
</feature>
<feature type="transmembrane region" description="Helical" evidence="1">
    <location>
        <begin position="72"/>
        <end position="92"/>
    </location>
</feature>
<feature type="transmembrane region" description="Helical" evidence="1">
    <location>
        <begin position="104"/>
        <end position="124"/>
    </location>
</feature>
<feature type="transmembrane region" description="Helical" evidence="1">
    <location>
        <begin position="150"/>
        <end position="170"/>
    </location>
</feature>
<feature type="transmembrane region" description="Helical" evidence="1">
    <location>
        <begin position="230"/>
        <end position="250"/>
    </location>
</feature>
<feature type="transmembrane region" description="Helical" evidence="1">
    <location>
        <begin position="264"/>
        <end position="281"/>
    </location>
</feature>
<feature type="transmembrane region" description="Helical" evidence="1">
    <location>
        <begin position="291"/>
        <end position="311"/>
    </location>
</feature>
<evidence type="ECO:0000255" key="1">
    <source>
        <dbReference type="HAMAP-Rule" id="MF_01391"/>
    </source>
</evidence>
<protein>
    <recommendedName>
        <fullName evidence="1">Cytochrome c biogenesis protein CcsA</fullName>
    </recommendedName>
</protein>
<comment type="function">
    <text evidence="1">Required during biogenesis of c-type cytochromes (cytochrome c6 and cytochrome f) at the step of heme attachment.</text>
</comment>
<comment type="subunit">
    <text evidence="1">May interact with Ccs1.</text>
</comment>
<comment type="subcellular location">
    <subcellularLocation>
        <location evidence="1">Plastid</location>
        <location evidence="1">Chloroplast thylakoid membrane</location>
        <topology evidence="1">Multi-pass membrane protein</topology>
    </subcellularLocation>
</comment>
<comment type="similarity">
    <text evidence="1">Belongs to the CcmF/CycK/Ccl1/NrfE/CcsA family.</text>
</comment>
<sequence>MHTSIVTLNLDAYQNFLANAIFCNLLLTMCLYWFSLIIVNNNLICNLAKFSAVNSNVILFFYLSWRWYNYNFFPLSNLYESLMFLSCLLLFIYQFIEFKTRSRVIGALVLPLIVLVQGFASLSLPTAMQKSSPLVPALQSNWLMLHVSMMMLSYATLLLGSLFSILYLVLYKDKKILTKKSIKEQFVEENFVFQLTTSAFSLNQTSNIITEAKTDRQRLILSLDNWSYRTIGIGFPFLTMGIISGAVWANEAWGSYWSWDPKETWALITWLIFASYLHARLTKGWRGKRAAFLGSFGFFIVWVCYLGVNFLGKGLHSYGFLN</sequence>
<gene>
    <name evidence="1" type="primary">ccsA</name>
    <name type="ordered locus">Heak293_Cp090</name>
</gene>
<name>CCSA_HETA2</name>
<accession>B2XT99</accession>
<organism>
    <name type="scientific">Heterosigma akashiwo (strain NIES-293 / 8280G21-1)</name>
    <dbReference type="NCBI Taxonomy" id="536047"/>
    <lineage>
        <taxon>Eukaryota</taxon>
        <taxon>Sar</taxon>
        <taxon>Stramenopiles</taxon>
        <taxon>Ochrophyta</taxon>
        <taxon>Raphidophyceae</taxon>
        <taxon>Chattonellales</taxon>
        <taxon>Chattonellaceae</taxon>
        <taxon>Heterosigma</taxon>
    </lineage>
</organism>
<proteinExistence type="inferred from homology"/>
<dbReference type="EMBL" id="EU168190">
    <property type="protein sequence ID" value="ABV65997.1"/>
    <property type="molecule type" value="Genomic_DNA"/>
</dbReference>
<dbReference type="RefSeq" id="YP_001936391.1">
    <property type="nucleotide sequence ID" value="NC_010772.1"/>
</dbReference>
<dbReference type="SMR" id="B2XT99"/>
<dbReference type="GeneID" id="6335543"/>
<dbReference type="GO" id="GO:0009535">
    <property type="term" value="C:chloroplast thylakoid membrane"/>
    <property type="evidence" value="ECO:0007669"/>
    <property type="project" value="UniProtKB-SubCell"/>
</dbReference>
<dbReference type="GO" id="GO:0005886">
    <property type="term" value="C:plasma membrane"/>
    <property type="evidence" value="ECO:0007669"/>
    <property type="project" value="TreeGrafter"/>
</dbReference>
<dbReference type="GO" id="GO:0020037">
    <property type="term" value="F:heme binding"/>
    <property type="evidence" value="ECO:0007669"/>
    <property type="project" value="InterPro"/>
</dbReference>
<dbReference type="GO" id="GO:0017004">
    <property type="term" value="P:cytochrome complex assembly"/>
    <property type="evidence" value="ECO:0007669"/>
    <property type="project" value="UniProtKB-UniRule"/>
</dbReference>
<dbReference type="HAMAP" id="MF_01391">
    <property type="entry name" value="CytC_CcsA"/>
    <property type="match status" value="1"/>
</dbReference>
<dbReference type="InterPro" id="IPR002541">
    <property type="entry name" value="Cyt_c_assembly"/>
</dbReference>
<dbReference type="InterPro" id="IPR017562">
    <property type="entry name" value="Cyt_c_biogenesis_CcsA"/>
</dbReference>
<dbReference type="InterPro" id="IPR045062">
    <property type="entry name" value="Cyt_c_biogenesis_CcsA/CcmC"/>
</dbReference>
<dbReference type="NCBIfam" id="TIGR03144">
    <property type="entry name" value="cytochr_II_ccsB"/>
    <property type="match status" value="1"/>
</dbReference>
<dbReference type="PANTHER" id="PTHR30071:SF1">
    <property type="entry name" value="CYTOCHROME B_B6 PROTEIN-RELATED"/>
    <property type="match status" value="1"/>
</dbReference>
<dbReference type="PANTHER" id="PTHR30071">
    <property type="entry name" value="HEME EXPORTER PROTEIN C"/>
    <property type="match status" value="1"/>
</dbReference>
<dbReference type="Pfam" id="PF01578">
    <property type="entry name" value="Cytochrom_C_asm"/>
    <property type="match status" value="1"/>
</dbReference>
<reference key="1">
    <citation type="journal article" date="2008" name="BMC Genomics">
        <title>Chloroplast genome sequencing analysis of Heterosigma akashiwo CCMP452 (West Atlantic) and NIES293 (West Pacific) strains.</title>
        <authorList>
            <person name="Cattolico R.A."/>
            <person name="Jacobs M.A."/>
            <person name="Zhou Y."/>
            <person name="Chang J."/>
            <person name="Duplessis M."/>
            <person name="Lybrand T."/>
            <person name="McKay J."/>
            <person name="Ong H.C."/>
            <person name="Sims E."/>
            <person name="Rocap G."/>
        </authorList>
    </citation>
    <scope>NUCLEOTIDE SEQUENCE [LARGE SCALE GENOMIC DNA]</scope>
</reference>